<keyword id="KW-0002">3D-structure</keyword>
<keyword id="KW-0025">Alternative splicing</keyword>
<keyword id="KW-1003">Cell membrane</keyword>
<keyword id="KW-1015">Disulfide bond</keyword>
<keyword id="KW-0325">Glycoprotein</keyword>
<keyword id="KW-0406">Ion transport</keyword>
<keyword id="KW-0445">Lipid transport</keyword>
<keyword id="KW-0472">Membrane</keyword>
<keyword id="KW-0597">Phosphoprotein</keyword>
<keyword id="KW-0646">Protease inhibitor</keyword>
<keyword id="KW-1267">Proteomics identification</keyword>
<keyword id="KW-1185">Reference proteome</keyword>
<keyword id="KW-0722">Serine protease inhibitor</keyword>
<keyword id="KW-0812">Transmembrane</keyword>
<keyword id="KW-1133">Transmembrane helix</keyword>
<keyword id="KW-0813">Transport</keyword>
<name>SO1B3_HUMAN</name>
<dbReference type="EMBL" id="AJ400763">
    <property type="protein sequence ID" value="CAB97008.1"/>
    <property type="molecule type" value="Genomic_DNA"/>
</dbReference>
<dbReference type="EMBL" id="AJ400764">
    <property type="protein sequence ID" value="CAB97008.1"/>
    <property type="status" value="JOINED"/>
    <property type="molecule type" value="Genomic_DNA"/>
</dbReference>
<dbReference type="EMBL" id="AJ400765">
    <property type="protein sequence ID" value="CAB97008.1"/>
    <property type="status" value="JOINED"/>
    <property type="molecule type" value="Genomic_DNA"/>
</dbReference>
<dbReference type="EMBL" id="AJ400766">
    <property type="protein sequence ID" value="CAB97008.1"/>
    <property type="status" value="JOINED"/>
    <property type="molecule type" value="Genomic_DNA"/>
</dbReference>
<dbReference type="EMBL" id="AJ400767">
    <property type="protein sequence ID" value="CAB97008.1"/>
    <property type="status" value="JOINED"/>
    <property type="molecule type" value="Genomic_DNA"/>
</dbReference>
<dbReference type="EMBL" id="AJ400768">
    <property type="protein sequence ID" value="CAB97008.1"/>
    <property type="status" value="JOINED"/>
    <property type="molecule type" value="Genomic_DNA"/>
</dbReference>
<dbReference type="EMBL" id="AJ400769">
    <property type="protein sequence ID" value="CAB97008.1"/>
    <property type="status" value="JOINED"/>
    <property type="molecule type" value="Genomic_DNA"/>
</dbReference>
<dbReference type="EMBL" id="AJ400770">
    <property type="protein sequence ID" value="CAB97008.1"/>
    <property type="status" value="JOINED"/>
    <property type="molecule type" value="Genomic_DNA"/>
</dbReference>
<dbReference type="EMBL" id="AJ400771">
    <property type="protein sequence ID" value="CAB97008.1"/>
    <property type="status" value="JOINED"/>
    <property type="molecule type" value="Genomic_DNA"/>
</dbReference>
<dbReference type="EMBL" id="AJ400772">
    <property type="protein sequence ID" value="CAB97008.1"/>
    <property type="status" value="JOINED"/>
    <property type="molecule type" value="Genomic_DNA"/>
</dbReference>
<dbReference type="EMBL" id="AJ400773">
    <property type="protein sequence ID" value="CAB97008.1"/>
    <property type="status" value="JOINED"/>
    <property type="molecule type" value="Genomic_DNA"/>
</dbReference>
<dbReference type="EMBL" id="AJ400774">
    <property type="protein sequence ID" value="CAB97008.1"/>
    <property type="status" value="JOINED"/>
    <property type="molecule type" value="Genomic_DNA"/>
</dbReference>
<dbReference type="EMBL" id="AJ400775">
    <property type="protein sequence ID" value="CAB97008.1"/>
    <property type="status" value="JOINED"/>
    <property type="molecule type" value="Genomic_DNA"/>
</dbReference>
<dbReference type="EMBL" id="AJ400776">
    <property type="protein sequence ID" value="CAB97008.1"/>
    <property type="status" value="JOINED"/>
    <property type="molecule type" value="Genomic_DNA"/>
</dbReference>
<dbReference type="EMBL" id="AJ251506">
    <property type="protein sequence ID" value="CAB96997.1"/>
    <property type="molecule type" value="mRNA"/>
</dbReference>
<dbReference type="EMBL" id="AF187815">
    <property type="protein sequence ID" value="AAG43445.1"/>
    <property type="molecule type" value="mRNA"/>
</dbReference>
<dbReference type="EMBL" id="AY257471">
    <property type="protein sequence ID" value="AAP81212.1"/>
    <property type="molecule type" value="mRNA"/>
</dbReference>
<dbReference type="EMBL" id="AY442326">
    <property type="protein sequence ID" value="AAS01768.1"/>
    <property type="molecule type" value="mRNA"/>
</dbReference>
<dbReference type="EMBL" id="AC011604">
    <property type="status" value="NOT_ANNOTATED_CDS"/>
    <property type="molecule type" value="Genomic_DNA"/>
</dbReference>
<dbReference type="EMBL" id="AC087309">
    <property type="status" value="NOT_ANNOTATED_CDS"/>
    <property type="molecule type" value="Genomic_DNA"/>
</dbReference>
<dbReference type="CCDS" id="CCDS8684.1">
    <molecule id="Q9NPD5-1"/>
</dbReference>
<dbReference type="RefSeq" id="NP_062818.1">
    <molecule id="Q9NPD5-1"/>
    <property type="nucleotide sequence ID" value="NM_019844.4"/>
</dbReference>
<dbReference type="PDB" id="8PG0">
    <property type="method" value="EM"/>
    <property type="resolution" value="2.97 A"/>
    <property type="chains" value="A=1-702"/>
</dbReference>
<dbReference type="PDBsum" id="8PG0"/>
<dbReference type="EMDB" id="EMD-17655"/>
<dbReference type="SMR" id="Q9NPD5"/>
<dbReference type="BioGRID" id="118182">
    <property type="interactions" value="9"/>
</dbReference>
<dbReference type="FunCoup" id="Q9NPD5">
    <property type="interactions" value="182"/>
</dbReference>
<dbReference type="IntAct" id="Q9NPD5">
    <property type="interactions" value="7"/>
</dbReference>
<dbReference type="STRING" id="9606.ENSP00000261196"/>
<dbReference type="BindingDB" id="Q9NPD5"/>
<dbReference type="ChEMBL" id="CHEMBL1743121"/>
<dbReference type="DrugBank" id="DB06403">
    <property type="generic name" value="Ambrisentan"/>
</dbReference>
<dbReference type="DrugBank" id="DB12597">
    <property type="generic name" value="Asciminib"/>
</dbReference>
<dbReference type="DrugBank" id="DB11586">
    <property type="generic name" value="Asunaprevir"/>
</dbReference>
<dbReference type="DrugBank" id="DB05016">
    <property type="generic name" value="Ataluren"/>
</dbReference>
<dbReference type="DrugBank" id="DB01072">
    <property type="generic name" value="Atazanavir"/>
</dbReference>
<dbReference type="DrugBank" id="DB16098">
    <property type="generic name" value="Atogepant"/>
</dbReference>
<dbReference type="DrugBank" id="DB01076">
    <property type="generic name" value="Atorvastatin"/>
</dbReference>
<dbReference type="DrugBank" id="DB11817">
    <property type="generic name" value="Baricitinib"/>
</dbReference>
<dbReference type="DrugBank" id="DB00394">
    <property type="generic name" value="Beclomethasone dipropionate"/>
</dbReference>
<dbReference type="DrugBank" id="DB15719">
    <property type="generic name" value="Belantamab mafodotin"/>
</dbReference>
<dbReference type="DrugBank" id="DB15463">
    <property type="generic name" value="Belzutifan"/>
</dbReference>
<dbReference type="DrugBank" id="DB11936">
    <property type="generic name" value="Bempedoic acid"/>
</dbReference>
<dbReference type="DrugBank" id="DB00188">
    <property type="generic name" value="Bortezomib"/>
</dbReference>
<dbReference type="DrugBank" id="DB12151">
    <property type="generic name" value="Brincidofovir"/>
</dbReference>
<dbReference type="DrugBank" id="DB06772">
    <property type="generic name" value="Cabazitaxel"/>
</dbReference>
<dbReference type="DrugBank" id="DB12218">
    <property type="generic name" value="Capivasertib"/>
</dbReference>
<dbReference type="DrugBank" id="DB00520">
    <property type="generic name" value="Caspofungin"/>
</dbReference>
<dbReference type="DrugBank" id="DB04918">
    <property type="generic name" value="Ceftobiprole"/>
</dbReference>
<dbReference type="DrugBank" id="DB14733">
    <property type="generic name" value="Ceftobiprole medocaril"/>
</dbReference>
<dbReference type="DrugBank" id="DB08862">
    <property type="generic name" value="Cholecystokinin"/>
</dbReference>
<dbReference type="DrugBank" id="DB02659">
    <property type="generic name" value="Cholic Acid"/>
</dbReference>
<dbReference type="DrugBank" id="DB01211">
    <property type="generic name" value="Clarithromycin"/>
</dbReference>
<dbReference type="DrugBank" id="DB00257">
    <property type="generic name" value="Clotrimazole"/>
</dbReference>
<dbReference type="DrugBank" id="DB09065">
    <property type="generic name" value="Cobicistat"/>
</dbReference>
<dbReference type="DrugBank" id="DB05239">
    <property type="generic name" value="Cobimetinib"/>
</dbReference>
<dbReference type="DrugBank" id="DB00286">
    <property type="generic name" value="Conjugated estrogens"/>
</dbReference>
<dbReference type="DrugBank" id="DB00091">
    <property type="generic name" value="Cyclosporine"/>
</dbReference>
<dbReference type="DrugBank" id="DB08912">
    <property type="generic name" value="Dabrafenib"/>
</dbReference>
<dbReference type="DrugBank" id="DB09102">
    <property type="generic name" value="Daclatasvir"/>
</dbReference>
<dbReference type="DrugBank" id="DB11682">
    <property type="generic name" value="Daprodustat"/>
</dbReference>
<dbReference type="DrugBank" id="DB12941">
    <property type="generic name" value="Darolutamide"/>
</dbReference>
<dbReference type="DrugBank" id="DB16650">
    <property type="generic name" value="Deucravacitinib"/>
</dbReference>
<dbReference type="DrugBank" id="DB08995">
    <property type="generic name" value="Diosmin"/>
</dbReference>
<dbReference type="DrugBank" id="DB00975">
    <property type="generic name" value="Dipyridamole"/>
</dbReference>
<dbReference type="DrugBank" id="DB01248">
    <property type="generic name" value="Docetaxel"/>
</dbReference>
<dbReference type="DrugBank" id="DB05928">
    <property type="generic name" value="Dovitinib"/>
</dbReference>
<dbReference type="DrugBank" id="DB08861">
    <property type="generic name" value="DPDPE"/>
</dbReference>
<dbReference type="DrugBank" id="DB04855">
    <property type="generic name" value="Dronedarone"/>
</dbReference>
<dbReference type="DrugBank" id="DB15444">
    <property type="generic name" value="Elexacaftor"/>
</dbReference>
<dbReference type="DrugBank" id="DB09038">
    <property type="generic name" value="Empagliflozin"/>
</dbReference>
<dbReference type="DrugBank" id="DB13874">
    <property type="generic name" value="Enasidenib"/>
</dbReference>
<dbReference type="DrugBank" id="DB11718">
    <property type="generic name" value="Encorafenib"/>
</dbReference>
<dbReference type="DrugBank" id="DB00199">
    <property type="generic name" value="Erythromycin"/>
</dbReference>
<dbReference type="DrugBank" id="DB00783">
    <property type="generic name" value="Estradiol"/>
</dbReference>
<dbReference type="DrugBank" id="DB13952">
    <property type="generic name" value="Estradiol acetate"/>
</dbReference>
<dbReference type="DrugBank" id="DB13953">
    <property type="generic name" value="Estradiol benzoate"/>
</dbReference>
<dbReference type="DrugBank" id="DB13954">
    <property type="generic name" value="Estradiol cypionate"/>
</dbReference>
<dbReference type="DrugBank" id="DB13955">
    <property type="generic name" value="Estradiol dienanthate"/>
</dbReference>
<dbReference type="DrugBank" id="DB13956">
    <property type="generic name" value="Estradiol valerate"/>
</dbReference>
<dbReference type="DrugBank" id="DB01590">
    <property type="generic name" value="Everolimus"/>
</dbReference>
<dbReference type="DrugBank" id="DB12500">
    <property type="generic name" value="Fedratinib"/>
</dbReference>
<dbReference type="DrugBank" id="DB12265">
    <property type="generic name" value="Fexinidazole"/>
</dbReference>
<dbReference type="DrugBank" id="DB00950">
    <property type="generic name" value="Fexofenadine"/>
</dbReference>
<dbReference type="DrugBank" id="DB01095">
    <property type="generic name" value="Fluvastatin"/>
</dbReference>
<dbReference type="DrugBank" id="DB11796">
    <property type="generic name" value="Fostemsavir"/>
</dbReference>
<dbReference type="DrugBank" id="DB08884">
    <property type="generic name" value="Gadoxetic acid"/>
</dbReference>
<dbReference type="DrugBank" id="DB01241">
    <property type="generic name" value="Gemfibrozil"/>
</dbReference>
<dbReference type="DrugBank" id="DB06749">
    <property type="generic name" value="Ginsenoside Rb1"/>
</dbReference>
<dbReference type="DrugBank" id="DB06750">
    <property type="generic name" value="Ginsenoside Rg1"/>
</dbReference>
<dbReference type="DrugBank" id="DB13879">
    <property type="generic name" value="Glecaprevir"/>
</dbReference>
<dbReference type="DrugBank" id="DB02691">
    <property type="generic name" value="Glycocholic acid"/>
</dbReference>
<dbReference type="DrugBank" id="DB11575">
    <property type="generic name" value="Grazoprevir"/>
</dbReference>
<dbReference type="DrugBank" id="DB01005">
    <property type="generic name" value="Hydroxyurea"/>
</dbReference>
<dbReference type="DrugBank" id="DB12471">
    <property type="generic name" value="Ibrexafungerp"/>
</dbReference>
<dbReference type="DrugBank" id="DB09054">
    <property type="generic name" value="Idelalisib"/>
</dbReference>
<dbReference type="DrugBank" id="DB00619">
    <property type="generic name" value="Imatinib"/>
</dbReference>
<dbReference type="DrugBank" id="DB14909">
    <property type="generic name" value="Imetelstat"/>
</dbReference>
<dbReference type="DrugBank" id="DB11886">
    <property type="generic name" value="Infigratinib"/>
</dbReference>
<dbReference type="DrugBank" id="DB11757">
    <property type="generic name" value="Istradefylline"/>
</dbReference>
<dbReference type="DrugBank" id="DB00602">
    <property type="generic name" value="Ivermectin"/>
</dbReference>
<dbReference type="DrugBank" id="DB16217">
    <property type="generic name" value="Leniolisib"/>
</dbReference>
<dbReference type="DrugBank" id="DB09078">
    <property type="generic name" value="Lenvatinib"/>
</dbReference>
<dbReference type="DrugBank" id="DB12070">
    <property type="generic name" value="Letermovir"/>
</dbReference>
<dbReference type="DrugBank" id="DB08855">
    <property type="generic name" value="Leukotriene C4"/>
</dbReference>
<dbReference type="DrugBank" id="DB13153">
    <property type="generic name" value="Levomenol"/>
</dbReference>
<dbReference type="DrugBank" id="DB13139">
    <property type="generic name" value="Levosalbutamol"/>
</dbReference>
<dbReference type="DrugBank" id="DB17083">
    <property type="generic name" value="Linzagolix"/>
</dbReference>
<dbReference type="DrugBank" id="DB00279">
    <property type="generic name" value="Liothyronine"/>
</dbReference>
<dbReference type="DrugBank" id="DB01583">
    <property type="generic name" value="Liotrix"/>
</dbReference>
<dbReference type="DrugBank" id="DB06448">
    <property type="generic name" value="Lonafarnib"/>
</dbReference>
<dbReference type="DrugBank" id="DB01601">
    <property type="generic name" value="Lopinavir"/>
</dbReference>
<dbReference type="DrugBank" id="DB00227">
    <property type="generic name" value="Lovastatin"/>
</dbReference>
<dbReference type="DrugBank" id="DB12674">
    <property type="generic name" value="Lurbinectedin"/>
</dbReference>
<dbReference type="DrugBank" id="DB00244">
    <property type="generic name" value="Mesalazine"/>
</dbReference>
<dbReference type="DrugBank" id="DB00563">
    <property type="generic name" value="Methotrexate"/>
</dbReference>
<dbReference type="DrugBank" id="DB00834">
    <property type="generic name" value="Mifepristone"/>
</dbReference>
<dbReference type="DrugBank" id="DB11763">
    <property type="generic name" value="Momelotinib"/>
</dbReference>
<dbReference type="DrugBank" id="DB00688">
    <property type="generic name" value="Mycophenolate mofetil"/>
</dbReference>
<dbReference type="DrugBank" id="DB01149">
    <property type="generic name" value="Nefazodone"/>
</dbReference>
<dbReference type="DrugBank" id="DB00220">
    <property type="generic name" value="Nelfinavir"/>
</dbReference>
<dbReference type="DrugBank" id="DB01051">
    <property type="generic name" value="Novobiocin"/>
</dbReference>
<dbReference type="DrugBank" id="DB00646">
    <property type="generic name" value="Nystatin"/>
</dbReference>
<dbReference type="DrugBank" id="DB00275">
    <property type="generic name" value="Olmesartan"/>
</dbReference>
<dbReference type="DrugBank" id="DB16267">
    <property type="generic name" value="Olutasidenib"/>
</dbReference>
<dbReference type="DrugBank" id="DB11632">
    <property type="generic name" value="Opicapone"/>
</dbReference>
<dbReference type="DrugBank" id="DB01092">
    <property type="generic name" value="Ouabain"/>
</dbReference>
<dbReference type="DrugBank" id="DB01229">
    <property type="generic name" value="Paclitaxel"/>
</dbReference>
<dbReference type="DrugBank" id="DB15575">
    <property type="generic name" value="Padeliporfin"/>
</dbReference>
<dbReference type="DrugBank" id="DB15413">
    <property type="generic name" value="Pafolacianine"/>
</dbReference>
<dbReference type="DrugBank" id="DB05467">
    <property type="generic name" value="Palovarotene"/>
</dbReference>
<dbReference type="DrugBank" id="DB13154">
    <property type="generic name" value="Parachlorophenol"/>
</dbReference>
<dbReference type="DrugBank" id="DB09297">
    <property type="generic name" value="Paritaprevir"/>
</dbReference>
<dbReference type="DrugBank" id="DB12978">
    <property type="generic name" value="Pexidartinib"/>
</dbReference>
<dbReference type="DrugBank" id="DB13878">
    <property type="generic name" value="Pibrentasvir"/>
</dbReference>
<dbReference type="DrugBank" id="DB01132">
    <property type="generic name" value="Pioglitazone"/>
</dbReference>
<dbReference type="DrugBank" id="DB08860">
    <property type="generic name" value="Pitavastatin"/>
</dbReference>
<dbReference type="DrugBank" id="DB06813">
    <property type="generic name" value="Pralatrexate"/>
</dbReference>
<dbReference type="DrugBank" id="DB15822">
    <property type="generic name" value="Pralsetinib"/>
</dbReference>
<dbReference type="DrugBank" id="DB01708">
    <property type="generic name" value="Prasterone"/>
</dbReference>
<dbReference type="DrugBank" id="DB05804">
    <property type="generic name" value="Prasterone sulfate"/>
</dbReference>
<dbReference type="DrugBank" id="DB00175">
    <property type="generic name" value="Pravastatin"/>
</dbReference>
<dbReference type="DrugBank" id="DB00396">
    <property type="generic name" value="Progesterone"/>
</dbReference>
<dbReference type="DrugBank" id="DB00481">
    <property type="generic name" value="Raloxifene"/>
</dbReference>
<dbReference type="DrugBank" id="DB14761">
    <property type="generic name" value="Remdesivir"/>
</dbReference>
<dbReference type="DrugBank" id="DB12914">
    <property type="generic name" value="Resmetirom"/>
</dbReference>
<dbReference type="DrugBank" id="DB11855">
    <property type="generic name" value="Revefenacin"/>
</dbReference>
<dbReference type="DrugBank" id="DB01045">
    <property type="generic name" value="Rifampin"/>
</dbReference>
<dbReference type="DrugBank" id="DB11753">
    <property type="generic name" value="Rifamycin"/>
</dbReference>
<dbReference type="DrugBank" id="DB08864">
    <property type="generic name" value="Rilpivirine"/>
</dbReference>
<dbReference type="DrugBank" id="DB12457">
    <property type="generic name" value="Rimegepant"/>
</dbReference>
<dbReference type="DrugBank" id="DB00503">
    <property type="generic name" value="Ritonavir"/>
</dbReference>
<dbReference type="DrugBank" id="DB06176">
    <property type="generic name" value="Romidepsin"/>
</dbReference>
<dbReference type="DrugBank" id="DB01098">
    <property type="generic name" value="Rosuvastatin"/>
</dbReference>
<dbReference type="DrugBank" id="DB12332">
    <property type="generic name" value="Rucaparib"/>
</dbReference>
<dbReference type="DrugBank" id="DB09292">
    <property type="generic name" value="Sacubitril"/>
</dbReference>
<dbReference type="DrugBank" id="DB11362">
    <property type="generic name" value="Selexipag"/>
</dbReference>
<dbReference type="DrugBank" id="DB11942">
    <property type="generic name" value="Selinexor"/>
</dbReference>
<dbReference type="DrugBank" id="DB09298">
    <property type="generic name" value="Silibinin"/>
</dbReference>
<dbReference type="DrugBank" id="DB06290">
    <property type="generic name" value="Simeprevir"/>
</dbReference>
<dbReference type="DrugBank" id="DB00641">
    <property type="generic name" value="Simvastatin"/>
</dbReference>
<dbReference type="DrugBank" id="DB09142">
    <property type="generic name" value="Sincalide"/>
</dbReference>
<dbReference type="DrugBank" id="DB12713">
    <property type="generic name" value="Sotagliflozin"/>
</dbReference>
<dbReference type="DrugBank" id="DB12548">
    <property type="generic name" value="Sparsentan"/>
</dbReference>
<dbReference type="DrugBank" id="DB00795">
    <property type="generic name" value="Sulfasalazine"/>
</dbReference>
<dbReference type="DrugBank" id="DB04348">
    <property type="generic name" value="Taurocholic acid"/>
</dbReference>
<dbReference type="DrugBank" id="DB09137">
    <property type="generic name" value="Technetium Tc-99m mebrofenin"/>
</dbReference>
<dbReference type="DrugBank" id="DB00976">
    <property type="generic name" value="Telithromycin"/>
</dbReference>
<dbReference type="DrugBank" id="DB09299">
    <property type="generic name" value="Tenofovir alafenamide"/>
</dbReference>
<dbReference type="DrugBank" id="DB00624">
    <property type="generic name" value="Testosterone"/>
</dbReference>
<dbReference type="DrugBank" id="DB13946">
    <property type="generic name" value="Testosterone undecanoate"/>
</dbReference>
<dbReference type="DrugBank" id="DB11712">
    <property type="generic name" value="Tezacaftor"/>
</dbReference>
<dbReference type="DrugBank" id="DB00932">
    <property type="generic name" value="Tipranavir"/>
</dbReference>
<dbReference type="DrugBank" id="DB06137">
    <property type="generic name" value="Tirbanibulin"/>
</dbReference>
<dbReference type="DrugBank" id="DB14962">
    <property type="generic name" value="Trastuzumab deruxtecan"/>
</dbReference>
<dbReference type="DrugBank" id="DB06045">
    <property type="generic name" value="Trofinetide"/>
</dbReference>
<dbReference type="DrugBank" id="DB15328">
    <property type="generic name" value="Ubrogepant"/>
</dbReference>
<dbReference type="DrugBank" id="DB00177">
    <property type="generic name" value="Valsartan"/>
</dbReference>
<dbReference type="DrugBank" id="DB11869">
    <property type="generic name" value="Valspodar"/>
</dbReference>
<dbReference type="DrugBank" id="DB11613">
    <property type="generic name" value="Velpatasvir"/>
</dbReference>
<dbReference type="DrugBank" id="DB00541">
    <property type="generic name" value="Vincristine"/>
</dbReference>
<dbReference type="DrugBank" id="DB12026">
    <property type="generic name" value="Voxilaprevir"/>
</dbReference>
<dbReference type="DrugBank" id="DB15688">
    <property type="generic name" value="Zavegepant"/>
</dbReference>
<dbReference type="DrugCentral" id="Q9NPD5"/>
<dbReference type="GuidetoPHARMACOLOGY" id="1221"/>
<dbReference type="TCDB" id="2.A.60.1.12">
    <property type="family name" value="the organo anion transporter (oat) family"/>
</dbReference>
<dbReference type="GlyCosmos" id="Q9NPD5">
    <property type="glycosylation" value="8 sites, 1 glycan"/>
</dbReference>
<dbReference type="GlyGen" id="Q9NPD5">
    <property type="glycosylation" value="8 sites, 1 N-linked glycan (2 sites)"/>
</dbReference>
<dbReference type="iPTMnet" id="Q9NPD5"/>
<dbReference type="PhosphoSitePlus" id="Q9NPD5"/>
<dbReference type="BioMuta" id="SLCO1B3"/>
<dbReference type="DMDM" id="27734563"/>
<dbReference type="MassIVE" id="Q9NPD5"/>
<dbReference type="PaxDb" id="9606-ENSP00000261196"/>
<dbReference type="PeptideAtlas" id="Q9NPD5"/>
<dbReference type="ProteomicsDB" id="62988"/>
<dbReference type="ProteomicsDB" id="81974">
    <molecule id="Q9NPD5-1"/>
</dbReference>
<dbReference type="Antibodypedia" id="12268">
    <property type="antibodies" value="235 antibodies from 22 providers"/>
</dbReference>
<dbReference type="DNASU" id="28234"/>
<dbReference type="Ensembl" id="ENST00000261196.6">
    <molecule id="Q9NPD5-1"/>
    <property type="protein sequence ID" value="ENSP00000261196.2"/>
    <property type="gene ID" value="ENSG00000111700.13"/>
</dbReference>
<dbReference type="Ensembl" id="ENST00000381545.8">
    <molecule id="Q9NPD5-1"/>
    <property type="protein sequence ID" value="ENSP00000370956.4"/>
    <property type="gene ID" value="ENSG00000111700.13"/>
</dbReference>
<dbReference type="GeneID" id="28234"/>
<dbReference type="KEGG" id="hsa:28234"/>
<dbReference type="MANE-Select" id="ENST00000381545.8">
    <property type="protein sequence ID" value="ENSP00000370956.4"/>
    <property type="RefSeq nucleotide sequence ID" value="NM_019844.4"/>
    <property type="RefSeq protein sequence ID" value="NP_062818.1"/>
</dbReference>
<dbReference type="UCSC" id="uc001rel.5">
    <molecule id="Q9NPD5-1"/>
    <property type="organism name" value="human"/>
</dbReference>
<dbReference type="AGR" id="HGNC:10961"/>
<dbReference type="CTD" id="28234"/>
<dbReference type="DisGeNET" id="28234"/>
<dbReference type="GeneCards" id="SLCO1B3"/>
<dbReference type="GeneReviews" id="SLCO1B3"/>
<dbReference type="HGNC" id="HGNC:10961">
    <property type="gene designation" value="SLCO1B3"/>
</dbReference>
<dbReference type="HPA" id="ENSG00000111700">
    <property type="expression patterns" value="Tissue enriched (liver)"/>
</dbReference>
<dbReference type="MalaCards" id="SLCO1B3"/>
<dbReference type="MIM" id="237450">
    <property type="type" value="phenotype"/>
</dbReference>
<dbReference type="MIM" id="605495">
    <property type="type" value="gene"/>
</dbReference>
<dbReference type="neXtProt" id="NX_Q9NPD5"/>
<dbReference type="OpenTargets" id="ENSG00000111700"/>
<dbReference type="OpenTargets" id="ENSG00000257046"/>
<dbReference type="Orphanet" id="3111">
    <property type="disease" value="Rotor syndrome"/>
</dbReference>
<dbReference type="PharmGKB" id="PA35844"/>
<dbReference type="VEuPathDB" id="HostDB:ENSG00000111700"/>
<dbReference type="eggNOG" id="KOG3626">
    <property type="taxonomic scope" value="Eukaryota"/>
</dbReference>
<dbReference type="GeneTree" id="ENSGT01130000278287"/>
<dbReference type="HOGENOM" id="CLU_008954_4_0_1"/>
<dbReference type="InParanoid" id="Q9NPD5"/>
<dbReference type="OMA" id="SKITWFF"/>
<dbReference type="OrthoDB" id="5062115at2759"/>
<dbReference type="PAN-GO" id="Q9NPD5">
    <property type="GO annotations" value="5 GO annotations based on evolutionary models"/>
</dbReference>
<dbReference type="PhylomeDB" id="Q9NPD5"/>
<dbReference type="TreeFam" id="TF317540"/>
<dbReference type="PathwayCommons" id="Q9NPD5"/>
<dbReference type="Reactome" id="R-HSA-159418">
    <property type="pathway name" value="Recycling of bile acids and salts"/>
</dbReference>
<dbReference type="Reactome" id="R-HSA-189483">
    <property type="pathway name" value="Heme degradation"/>
</dbReference>
<dbReference type="Reactome" id="R-HSA-5619058">
    <property type="pathway name" value="Defective SLCO1B3 causes hyperbilirubinemia, Rotor type (HBLRR)"/>
</dbReference>
<dbReference type="Reactome" id="R-HSA-879518">
    <property type="pathway name" value="Transport of organic anions"/>
</dbReference>
<dbReference type="Reactome" id="R-HSA-9754706">
    <property type="pathway name" value="Atorvastatin ADME"/>
</dbReference>
<dbReference type="SIGNOR" id="Q9NPD5"/>
<dbReference type="BioGRID-ORCS" id="28234">
    <property type="hits" value="8 hits in 1143 CRISPR screens"/>
</dbReference>
<dbReference type="ChiTaRS" id="SLCO1B3">
    <property type="organism name" value="human"/>
</dbReference>
<dbReference type="GeneWiki" id="SLCO1B3"/>
<dbReference type="GenomeRNAi" id="28234"/>
<dbReference type="Pharos" id="Q9NPD5">
    <property type="development level" value="Tchem"/>
</dbReference>
<dbReference type="PRO" id="PR:Q9NPD5"/>
<dbReference type="Proteomes" id="UP000005640">
    <property type="component" value="Chromosome 12"/>
</dbReference>
<dbReference type="RNAct" id="Q9NPD5">
    <property type="molecule type" value="protein"/>
</dbReference>
<dbReference type="Bgee" id="ENSG00000111700">
    <property type="expression patterns" value="Expressed in right lobe of liver and 91 other cell types or tissues"/>
</dbReference>
<dbReference type="ExpressionAtlas" id="Q9NPD5">
    <property type="expression patterns" value="baseline and differential"/>
</dbReference>
<dbReference type="GO" id="GO:0009925">
    <property type="term" value="C:basal plasma membrane"/>
    <property type="evidence" value="ECO:0000314"/>
    <property type="project" value="UniProtKB"/>
</dbReference>
<dbReference type="GO" id="GO:0016323">
    <property type="term" value="C:basolateral plasma membrane"/>
    <property type="evidence" value="ECO:0000318"/>
    <property type="project" value="GO_Central"/>
</dbReference>
<dbReference type="GO" id="GO:0005886">
    <property type="term" value="C:plasma membrane"/>
    <property type="evidence" value="ECO:0000314"/>
    <property type="project" value="HPA"/>
</dbReference>
<dbReference type="GO" id="GO:0015125">
    <property type="term" value="F:bile acid transmembrane transporter activity"/>
    <property type="evidence" value="ECO:0000318"/>
    <property type="project" value="GO_Central"/>
</dbReference>
<dbReference type="GO" id="GO:0008514">
    <property type="term" value="F:organic anion transmembrane transporter activity"/>
    <property type="evidence" value="ECO:0000314"/>
    <property type="project" value="UniProtKB"/>
</dbReference>
<dbReference type="GO" id="GO:0004867">
    <property type="term" value="F:serine-type endopeptidase inhibitor activity"/>
    <property type="evidence" value="ECO:0007669"/>
    <property type="project" value="UniProtKB-KW"/>
</dbReference>
<dbReference type="GO" id="GO:0015347">
    <property type="term" value="F:sodium-independent organic anion transmembrane transporter activity"/>
    <property type="evidence" value="ECO:0000318"/>
    <property type="project" value="GO_Central"/>
</dbReference>
<dbReference type="GO" id="GO:0015721">
    <property type="term" value="P:bile acid and bile salt transport"/>
    <property type="evidence" value="ECO:0000318"/>
    <property type="project" value="GO_Central"/>
</dbReference>
<dbReference type="GO" id="GO:0042167">
    <property type="term" value="P:heme catabolic process"/>
    <property type="evidence" value="ECO:0000304"/>
    <property type="project" value="Reactome"/>
</dbReference>
<dbReference type="GO" id="GO:0006811">
    <property type="term" value="P:monoatomic ion transport"/>
    <property type="evidence" value="ECO:0007669"/>
    <property type="project" value="UniProtKB-KW"/>
</dbReference>
<dbReference type="GO" id="GO:0015711">
    <property type="term" value="P:organic anion transport"/>
    <property type="evidence" value="ECO:0000304"/>
    <property type="project" value="ProtInc"/>
</dbReference>
<dbReference type="GO" id="GO:0043252">
    <property type="term" value="P:sodium-independent organic anion transport"/>
    <property type="evidence" value="ECO:0000318"/>
    <property type="project" value="GO_Central"/>
</dbReference>
<dbReference type="GO" id="GO:0006805">
    <property type="term" value="P:xenobiotic metabolic process"/>
    <property type="evidence" value="ECO:0000304"/>
    <property type="project" value="Reactome"/>
</dbReference>
<dbReference type="Gene3D" id="3.30.60.30">
    <property type="match status" value="1"/>
</dbReference>
<dbReference type="Gene3D" id="1.20.1250.20">
    <property type="entry name" value="MFS general substrate transporter like domains"/>
    <property type="match status" value="1"/>
</dbReference>
<dbReference type="InterPro" id="IPR002350">
    <property type="entry name" value="Kazal_dom"/>
</dbReference>
<dbReference type="InterPro" id="IPR036058">
    <property type="entry name" value="Kazal_dom_sf"/>
</dbReference>
<dbReference type="InterPro" id="IPR020846">
    <property type="entry name" value="MFS_dom"/>
</dbReference>
<dbReference type="InterPro" id="IPR036259">
    <property type="entry name" value="MFS_trans_sf"/>
</dbReference>
<dbReference type="InterPro" id="IPR004156">
    <property type="entry name" value="OATP"/>
</dbReference>
<dbReference type="NCBIfam" id="TIGR00805">
    <property type="entry name" value="oat"/>
    <property type="match status" value="1"/>
</dbReference>
<dbReference type="PANTHER" id="PTHR11388">
    <property type="entry name" value="ORGANIC ANION TRANSPORTER"/>
    <property type="match status" value="1"/>
</dbReference>
<dbReference type="PANTHER" id="PTHR11388:SF89">
    <property type="entry name" value="SOLUTE CARRIER ORGANIC ANION TRANSPORTER FAMILY MEMBER 1B3"/>
    <property type="match status" value="1"/>
</dbReference>
<dbReference type="Pfam" id="PF07648">
    <property type="entry name" value="Kazal_2"/>
    <property type="match status" value="1"/>
</dbReference>
<dbReference type="Pfam" id="PF03137">
    <property type="entry name" value="OATP"/>
    <property type="match status" value="1"/>
</dbReference>
<dbReference type="SUPFAM" id="SSF100895">
    <property type="entry name" value="Kazal-type serine protease inhibitors"/>
    <property type="match status" value="1"/>
</dbReference>
<dbReference type="SUPFAM" id="SSF103473">
    <property type="entry name" value="MFS general substrate transporter"/>
    <property type="match status" value="1"/>
</dbReference>
<dbReference type="PROSITE" id="PS51465">
    <property type="entry name" value="KAZAL_2"/>
    <property type="match status" value="1"/>
</dbReference>
<dbReference type="PROSITE" id="PS50850">
    <property type="entry name" value="MFS"/>
    <property type="match status" value="1"/>
</dbReference>
<reference key="1">
    <citation type="journal article" date="2000" name="J. Biol. Chem.">
        <title>Localization and genomic organization of a new hepatocellular organic anion transporting polypeptide.</title>
        <authorList>
            <person name="Koenig J."/>
            <person name="Cui Y."/>
            <person name="Nies A.T."/>
            <person name="Keppler D."/>
        </authorList>
    </citation>
    <scope>NUCLEOTIDE SEQUENCE [GENOMIC DNA / MRNA] (ISOFORM SLCO1B3-1)</scope>
    <scope>GLYCOSYLATION</scope>
    <scope>FUNCTION</scope>
    <scope>TISSUE SPECIFICITY</scope>
    <scope>SUBCELLULAR LOCATION</scope>
    <scope>TRANSPORTER ACTIVITY</scope>
    <scope>BIOPHYSICOCHEMICAL PROPERTIES</scope>
    <source>
        <tissue>Liver</tissue>
    </source>
</reference>
<reference key="2">
    <citation type="journal article" date="2001" name="Gastroenterology">
        <title>LST-2, a human liver-specific organic anion transporter, determines methotrexate sensitivity in gastrointestinal cancers.</title>
        <authorList>
            <person name="Abe T."/>
            <person name="Unno M."/>
            <person name="Onogawa T."/>
            <person name="Tokui T."/>
            <person name="Kondo T.N."/>
            <person name="Nakagomi R."/>
            <person name="Adachi H."/>
            <person name="Fujiwara K."/>
            <person name="Okabe M."/>
            <person name="Suzuki T."/>
            <person name="Nunoki K."/>
            <person name="Sato E."/>
            <person name="Kakyo M."/>
            <person name="Nishio T."/>
            <person name="Sugita J."/>
            <person name="Asano N."/>
            <person name="Tanemoto M."/>
            <person name="Seki M."/>
            <person name="Date F."/>
            <person name="Ono K."/>
            <person name="Kondo Y."/>
            <person name="Shiiba K."/>
            <person name="Suzuki M."/>
            <person name="Ohtani H."/>
            <person name="Shimosegawa T."/>
            <person name="Iinuma K."/>
            <person name="Nagura H."/>
            <person name="Ito S."/>
            <person name="Matsuno S."/>
        </authorList>
    </citation>
    <scope>NUCLEOTIDE SEQUENCE [MRNA] (ISOFORM SLCO1B3-1)</scope>
    <source>
        <tissue>Liver</tissue>
    </source>
</reference>
<reference key="3">
    <citation type="submission" date="2003-10" db="EMBL/GenBank/DDBJ databases">
        <title>Molecular identification of LST-3 subtype.</title>
        <authorList>
            <person name="Mizutamari H."/>
            <person name="Abe T."/>
        </authorList>
    </citation>
    <scope>NUCLEOTIDE SEQUENCE [MRNA] (ISOFORM SLCO1B3-2)</scope>
</reference>
<reference key="4">
    <citation type="journal article" date="2006" name="Nature">
        <title>The finished DNA sequence of human chromosome 12.</title>
        <authorList>
            <person name="Scherer S.E."/>
            <person name="Muzny D.M."/>
            <person name="Buhay C.J."/>
            <person name="Chen R."/>
            <person name="Cree A."/>
            <person name="Ding Y."/>
            <person name="Dugan-Rocha S."/>
            <person name="Gill R."/>
            <person name="Gunaratne P."/>
            <person name="Harris R.A."/>
            <person name="Hawes A.C."/>
            <person name="Hernandez J."/>
            <person name="Hodgson A.V."/>
            <person name="Hume J."/>
            <person name="Jackson A."/>
            <person name="Khan Z.M."/>
            <person name="Kovar-Smith C."/>
            <person name="Lewis L.R."/>
            <person name="Lozado R.J."/>
            <person name="Metzker M.L."/>
            <person name="Milosavljevic A."/>
            <person name="Miner G.R."/>
            <person name="Montgomery K.T."/>
            <person name="Morgan M.B."/>
            <person name="Nazareth L.V."/>
            <person name="Scott G."/>
            <person name="Sodergren E."/>
            <person name="Song X.-Z."/>
            <person name="Steffen D."/>
            <person name="Lovering R.C."/>
            <person name="Wheeler D.A."/>
            <person name="Worley K.C."/>
            <person name="Yuan Y."/>
            <person name="Zhang Z."/>
            <person name="Adams C.Q."/>
            <person name="Ansari-Lari M.A."/>
            <person name="Ayele M."/>
            <person name="Brown M.J."/>
            <person name="Chen G."/>
            <person name="Chen Z."/>
            <person name="Clerc-Blankenburg K.P."/>
            <person name="Davis C."/>
            <person name="Delgado O."/>
            <person name="Dinh H.H."/>
            <person name="Draper H."/>
            <person name="Gonzalez-Garay M.L."/>
            <person name="Havlak P."/>
            <person name="Jackson L.R."/>
            <person name="Jacob L.S."/>
            <person name="Kelly S.H."/>
            <person name="Li L."/>
            <person name="Li Z."/>
            <person name="Liu J."/>
            <person name="Liu W."/>
            <person name="Lu J."/>
            <person name="Maheshwari M."/>
            <person name="Nguyen B.-V."/>
            <person name="Okwuonu G.O."/>
            <person name="Pasternak S."/>
            <person name="Perez L.M."/>
            <person name="Plopper F.J.H."/>
            <person name="Santibanez J."/>
            <person name="Shen H."/>
            <person name="Tabor P.E."/>
            <person name="Verduzco D."/>
            <person name="Waldron L."/>
            <person name="Wang Q."/>
            <person name="Williams G.A."/>
            <person name="Zhang J."/>
            <person name="Zhou J."/>
            <person name="Allen C.C."/>
            <person name="Amin A.G."/>
            <person name="Anyalebechi V."/>
            <person name="Bailey M."/>
            <person name="Barbaria J.A."/>
            <person name="Bimage K.E."/>
            <person name="Bryant N.P."/>
            <person name="Burch P.E."/>
            <person name="Burkett C.E."/>
            <person name="Burrell K.L."/>
            <person name="Calderon E."/>
            <person name="Cardenas V."/>
            <person name="Carter K."/>
            <person name="Casias K."/>
            <person name="Cavazos I."/>
            <person name="Cavazos S.R."/>
            <person name="Ceasar H."/>
            <person name="Chacko J."/>
            <person name="Chan S.N."/>
            <person name="Chavez D."/>
            <person name="Christopoulos C."/>
            <person name="Chu J."/>
            <person name="Cockrell R."/>
            <person name="Cox C.D."/>
            <person name="Dang M."/>
            <person name="Dathorne S.R."/>
            <person name="David R."/>
            <person name="Davis C.M."/>
            <person name="Davy-Carroll L."/>
            <person name="Deshazo D.R."/>
            <person name="Donlin J.E."/>
            <person name="D'Souza L."/>
            <person name="Eaves K.A."/>
            <person name="Egan A."/>
            <person name="Emery-Cohen A.J."/>
            <person name="Escotto M."/>
            <person name="Flagg N."/>
            <person name="Forbes L.D."/>
            <person name="Gabisi A.M."/>
            <person name="Garza M."/>
            <person name="Hamilton C."/>
            <person name="Henderson N."/>
            <person name="Hernandez O."/>
            <person name="Hines S."/>
            <person name="Hogues M.E."/>
            <person name="Huang M."/>
            <person name="Idlebird D.G."/>
            <person name="Johnson R."/>
            <person name="Jolivet A."/>
            <person name="Jones S."/>
            <person name="Kagan R."/>
            <person name="King L.M."/>
            <person name="Leal B."/>
            <person name="Lebow H."/>
            <person name="Lee S."/>
            <person name="LeVan J.M."/>
            <person name="Lewis L.C."/>
            <person name="London P."/>
            <person name="Lorensuhewa L.M."/>
            <person name="Loulseged H."/>
            <person name="Lovett D.A."/>
            <person name="Lucier A."/>
            <person name="Lucier R.L."/>
            <person name="Ma J."/>
            <person name="Madu R.C."/>
            <person name="Mapua P."/>
            <person name="Martindale A.D."/>
            <person name="Martinez E."/>
            <person name="Massey E."/>
            <person name="Mawhiney S."/>
            <person name="Meador M.G."/>
            <person name="Mendez S."/>
            <person name="Mercado C."/>
            <person name="Mercado I.C."/>
            <person name="Merritt C.E."/>
            <person name="Miner Z.L."/>
            <person name="Minja E."/>
            <person name="Mitchell T."/>
            <person name="Mohabbat F."/>
            <person name="Mohabbat K."/>
            <person name="Montgomery B."/>
            <person name="Moore N."/>
            <person name="Morris S."/>
            <person name="Munidasa M."/>
            <person name="Ngo R.N."/>
            <person name="Nguyen N.B."/>
            <person name="Nickerson E."/>
            <person name="Nwaokelemeh O.O."/>
            <person name="Nwokenkwo S."/>
            <person name="Obregon M."/>
            <person name="Oguh M."/>
            <person name="Oragunye N."/>
            <person name="Oviedo R.J."/>
            <person name="Parish B.J."/>
            <person name="Parker D.N."/>
            <person name="Parrish J."/>
            <person name="Parks K.L."/>
            <person name="Paul H.A."/>
            <person name="Payton B.A."/>
            <person name="Perez A."/>
            <person name="Perrin W."/>
            <person name="Pickens A."/>
            <person name="Primus E.L."/>
            <person name="Pu L.-L."/>
            <person name="Puazo M."/>
            <person name="Quiles M.M."/>
            <person name="Quiroz J.B."/>
            <person name="Rabata D."/>
            <person name="Reeves K."/>
            <person name="Ruiz S.J."/>
            <person name="Shao H."/>
            <person name="Sisson I."/>
            <person name="Sonaike T."/>
            <person name="Sorelle R.P."/>
            <person name="Sutton A.E."/>
            <person name="Svatek A.F."/>
            <person name="Svetz L.A."/>
            <person name="Tamerisa K.S."/>
            <person name="Taylor T.R."/>
            <person name="Teague B."/>
            <person name="Thomas N."/>
            <person name="Thorn R.D."/>
            <person name="Trejos Z.Y."/>
            <person name="Trevino B.K."/>
            <person name="Ukegbu O.N."/>
            <person name="Urban J.B."/>
            <person name="Vasquez L.I."/>
            <person name="Vera V.A."/>
            <person name="Villasana D.M."/>
            <person name="Wang L."/>
            <person name="Ward-Moore S."/>
            <person name="Warren J.T."/>
            <person name="Wei X."/>
            <person name="White F."/>
            <person name="Williamson A.L."/>
            <person name="Wleczyk R."/>
            <person name="Wooden H.S."/>
            <person name="Wooden S.H."/>
            <person name="Yen J."/>
            <person name="Yoon L."/>
            <person name="Yoon V."/>
            <person name="Zorrilla S.E."/>
            <person name="Nelson D."/>
            <person name="Kucherlapati R."/>
            <person name="Weinstock G."/>
            <person name="Gibbs R.A."/>
        </authorList>
    </citation>
    <scope>NUCLEOTIDE SEQUENCE [LARGE SCALE GENOMIC DNA]</scope>
</reference>
<reference key="5">
    <citation type="journal article" date="2001" name="Gastroenterology">
        <title>Organic anion-transporting polypeptide B (OATP-B) and its functional comparison with three other OATPs of human liver.</title>
        <authorList>
            <person name="Kullak-Ublick G.A."/>
            <person name="Ismair M.G."/>
            <person name="Stieger B."/>
            <person name="Landmann L."/>
            <person name="Huber R."/>
            <person name="Pizzagalli F."/>
            <person name="Fattinger K."/>
            <person name="Meier P.J."/>
            <person name="Hagenbuch B."/>
        </authorList>
    </citation>
    <scope>FUNCTION</scope>
</reference>
<reference key="6">
    <citation type="journal article" date="2003" name="Am. J. Physiol.">
        <title>Characterization and identification of steroid sulfate transporters of human placenta.</title>
        <authorList>
            <person name="Ugele B."/>
            <person name="St-Pierre M.V."/>
            <person name="Pihusch M."/>
            <person name="Bahn A."/>
            <person name="Hantschmann P."/>
        </authorList>
    </citation>
    <scope>TISSUE SPECIFICITY</scope>
</reference>
<reference key="7">
    <citation type="journal article" date="2003" name="Biochem. J.">
        <title>Role of organic anion-transporting polypeptides, OATP-A, OATP-C and OATP-8, in the human placenta-maternal liver tandem excretory pathway for foetal bilirubin.</title>
        <authorList>
            <person name="Briz O."/>
            <person name="Serrano M.A."/>
            <person name="MacIas R.I."/>
            <person name="Gonzalez-Gallego J."/>
            <person name="Marin J.J."/>
        </authorList>
    </citation>
    <scope>FUNCTION</scope>
    <scope>TRANSPORTER ACTIVITY</scope>
</reference>
<reference key="8">
    <citation type="journal article" date="2004" name="J. Pharmacol. Exp. Ther.">
        <title>Contribution of OATP2 (OATP1B1) and OATP8 (OATP1B3) to the hepatic uptake of pitavastatin in humans.</title>
        <authorList>
            <person name="Hirano M."/>
            <person name="Maeda K."/>
            <person name="Shitara Y."/>
            <person name="Sugiyama Y."/>
        </authorList>
    </citation>
    <scope>FUNCTION</scope>
    <scope>TRANSPORTER ACTIVITY</scope>
    <scope>BIOPHYSICOCHEMICAL PROPERTIES</scope>
    <scope>TISSUE SPECIFICITY</scope>
</reference>
<reference key="9">
    <citation type="journal article" date="2006" name="Drug Metab. Dispos.">
        <title>Involvement of transporters in the hepatic uptake and biliary excretion of valsartan, a selective antagonist of the angiotensin II AT1-receptor, in humans.</title>
        <authorList>
            <person name="Yamashiro W."/>
            <person name="Maeda K."/>
            <person name="Hirouchi M."/>
            <person name="Adachi Y."/>
            <person name="Hu Z."/>
            <person name="Sugiyama Y."/>
        </authorList>
    </citation>
    <scope>FUNCTION</scope>
    <scope>BIOPHYSICOCHEMICAL PROPERTIES</scope>
</reference>
<reference key="10">
    <citation type="journal article" date="2006" name="J. Pharmacol. Exp. Ther.">
        <title>Vectorial transport of enalapril by Oatp1a1/Mrp2 and OATP1B1 and OATP1B3/MRP2 in rat and human livers.</title>
        <authorList>
            <person name="Liu L."/>
            <person name="Cui Y."/>
            <person name="Chung A.Y."/>
            <person name="Shitara Y."/>
            <person name="Sugiyama Y."/>
            <person name="Keppler D."/>
            <person name="Pang K.S."/>
        </authorList>
    </citation>
    <scope>FUNCTION</scope>
</reference>
<reference key="11">
    <citation type="journal article" date="2007" name="Am. J. Physiol.">
        <title>Human organic anion transporter 1B1 and 1B3 function as bidirectional carriers and do not mediate GSH-bile acid cotransport.</title>
        <authorList>
            <person name="Mahagita C."/>
            <person name="Grassl S.M."/>
            <person name="Piyachaturawat P."/>
            <person name="Ballatori N."/>
        </authorList>
    </citation>
    <scope>FUNCTION</scope>
    <scope>TRANSPORTER ACTIVITY</scope>
</reference>
<reference key="12">
    <citation type="journal article" date="2009" name="Am. J. Physiol.">
        <title>Mechanisms of pH-gradient driven transport mediated by organic anion polypeptide transporters.</title>
        <authorList>
            <person name="Leuthold S."/>
            <person name="Hagenbuch B."/>
            <person name="Mohebbi N."/>
            <person name="Wagner C.A."/>
            <person name="Meier P.J."/>
            <person name="Stieger B."/>
        </authorList>
    </citation>
    <scope>FUNCTION</scope>
    <scope>TRANSPORTER ACTIVITY</scope>
    <scope>BIOPHYSICOCHEMICAL PROPERTIES</scope>
    <scope>DOMAIN</scope>
</reference>
<reference key="13">
    <citation type="journal article" date="2012" name="J. Clin. Invest.">
        <title>Complete OATP1B1 and OATP1B3 deficiency causes human Rotor syndrome by interrupting conjugated bilirubin reuptake into the liver.</title>
        <authorList>
            <person name="van de Steeg E."/>
            <person name="Stranecky V."/>
            <person name="Hartmannova H."/>
            <person name="Noskova L."/>
            <person name="Hrebicek M."/>
            <person name="Wagenaar E."/>
            <person name="van Esch A."/>
            <person name="de Waart D.R."/>
            <person name="Oude Elferink R.P."/>
            <person name="Kenworthy K.E."/>
            <person name="Sticova E."/>
            <person name="al-Edreesi M."/>
            <person name="Knisely A.S."/>
            <person name="Kmoch S."/>
            <person name="Jirsa M."/>
            <person name="Schinkel A.H."/>
        </authorList>
    </citation>
    <scope>FUNCTION</scope>
    <scope>INVOLVEMENT IN HBLRR</scope>
    <scope>TRANSPORTER ACTIVITY</scope>
</reference>
<reference key="14">
    <citation type="journal article" date="2013" name="Clin. Cancer Res.">
        <title>Influence of human OATP1B1, OATP1B3, and OATP1A2 on the pharmacokinetics of methotrexate and paclitaxel in humanized transgenic mice.</title>
        <authorList>
            <person name="van de Steeg E."/>
            <person name="van Esch A."/>
            <person name="Wagenaar E."/>
            <person name="Kenworthy K.E."/>
            <person name="Schinkel A.H."/>
        </authorList>
    </citation>
    <scope>FUNCTION</scope>
</reference>
<reference key="15">
    <citation type="journal article" date="2014" name="J. Proteomics">
        <title>An enzyme assisted RP-RPLC approach for in-depth analysis of human liver phosphoproteome.</title>
        <authorList>
            <person name="Bian Y."/>
            <person name="Song C."/>
            <person name="Cheng K."/>
            <person name="Dong M."/>
            <person name="Wang F."/>
            <person name="Huang J."/>
            <person name="Sun D."/>
            <person name="Wang L."/>
            <person name="Ye M."/>
            <person name="Zou H."/>
        </authorList>
    </citation>
    <scope>IDENTIFICATION BY MASS SPECTROMETRY [LARGE SCALE ANALYSIS]</scope>
    <source>
        <tissue>Liver</tissue>
    </source>
</reference>
<reference key="16">
    <citation type="journal article" date="2016" name="Xenobiotica">
        <title>Organic anion transporting polypeptide (OATP)-mediated transport of coproporphyrins I and III.</title>
        <authorList>
            <person name="Bednarczyk D."/>
            <person name="Boiselle C."/>
        </authorList>
    </citation>
    <scope>FUNCTION</scope>
    <scope>BIOPHYSICOCHEMICAL PROPERTIES</scope>
</reference>
<reference key="17">
    <citation type="journal article" date="2022" name="Drug Metab. Dispos.">
        <title>Localization of Xenobiotic Transporters Expressed at the Human Blood-Testis Barrier.</title>
        <authorList>
            <person name="Hau R.K."/>
            <person name="Klein R.R."/>
            <person name="Wright S.H."/>
            <person name="Cherrington N.J."/>
        </authorList>
    </citation>
    <scope>FUNCTION</scope>
    <scope>SUBCELLULAR LOCATION</scope>
    <scope>TISSUE SPECIFICITY</scope>
</reference>
<reference key="18">
    <citation type="journal article" date="2006" name="Science">
        <title>The consensus coding sequences of human breast and colorectal cancers.</title>
        <authorList>
            <person name="Sjoeblom T."/>
            <person name="Jones S."/>
            <person name="Wood L.D."/>
            <person name="Parsons D.W."/>
            <person name="Lin J."/>
            <person name="Barber T.D."/>
            <person name="Mandelker D."/>
            <person name="Leary R.J."/>
            <person name="Ptak J."/>
            <person name="Silliman N."/>
            <person name="Szabo S."/>
            <person name="Buckhaults P."/>
            <person name="Farrell C."/>
            <person name="Meeh P."/>
            <person name="Markowitz S.D."/>
            <person name="Willis J."/>
            <person name="Dawson D."/>
            <person name="Willson J.K.V."/>
            <person name="Gazdar A.F."/>
            <person name="Hartigan J."/>
            <person name="Wu L."/>
            <person name="Liu C."/>
            <person name="Parmigiani G."/>
            <person name="Park B.H."/>
            <person name="Bachman K.E."/>
            <person name="Papadopoulos N."/>
            <person name="Vogelstein B."/>
            <person name="Kinzler K.W."/>
            <person name="Velculescu V.E."/>
        </authorList>
    </citation>
    <scope>VARIANTS [LARGE SCALE ANALYSIS] MET-292 AND LEU-647</scope>
</reference>
<feature type="chain" id="PRO_0000191053" description="Solute carrier organic anion transporter family member 1B3">
    <location>
        <begin position="1"/>
        <end position="702"/>
    </location>
</feature>
<feature type="topological domain" description="Cytoplasmic" evidence="2">
    <location>
        <begin position="1"/>
        <end position="28"/>
    </location>
</feature>
<feature type="transmembrane region" description="Helical; Name=1" evidence="2">
    <location>
        <begin position="29"/>
        <end position="48"/>
    </location>
</feature>
<feature type="topological domain" description="Extracellular" evidence="2">
    <location>
        <begin position="49"/>
        <end position="67"/>
    </location>
</feature>
<feature type="transmembrane region" description="Helical; Name=2" evidence="2">
    <location>
        <begin position="68"/>
        <end position="88"/>
    </location>
</feature>
<feature type="topological domain" description="Cytoplasmic" evidence="2">
    <location>
        <begin position="89"/>
        <end position="94"/>
    </location>
</feature>
<feature type="transmembrane region" description="Helical; Name=3" evidence="2">
    <location>
        <begin position="95"/>
        <end position="119"/>
    </location>
</feature>
<feature type="topological domain" description="Extracellular" evidence="2">
    <location>
        <begin position="120"/>
        <end position="168"/>
    </location>
</feature>
<feature type="transmembrane region" description="Helical; Name=4" evidence="2">
    <location>
        <begin position="169"/>
        <end position="197"/>
    </location>
</feature>
<feature type="topological domain" description="Cytoplasmic" evidence="2">
    <location>
        <begin position="198"/>
        <end position="216"/>
    </location>
</feature>
<feature type="transmembrane region" description="Helical; Name=5" evidence="2">
    <location>
        <begin position="217"/>
        <end position="237"/>
    </location>
</feature>
<feature type="topological domain" description="Extracellular" evidence="2">
    <location>
        <begin position="238"/>
        <end position="255"/>
    </location>
</feature>
<feature type="transmembrane region" description="Helical; Name=6" evidence="2">
    <location>
        <begin position="256"/>
        <end position="280"/>
    </location>
</feature>
<feature type="topological domain" description="Cytoplasmic" evidence="2">
    <location>
        <begin position="281"/>
        <end position="331"/>
    </location>
</feature>
<feature type="transmembrane region" description="Helical; Name=7" evidence="2">
    <location>
        <begin position="332"/>
        <end position="353"/>
    </location>
</feature>
<feature type="topological domain" description="Extracellular" evidence="2">
    <location>
        <begin position="354"/>
        <end position="373"/>
    </location>
</feature>
<feature type="transmembrane region" description="Helical; Name=8" evidence="2">
    <location>
        <begin position="374"/>
        <end position="397"/>
    </location>
</feature>
<feature type="topological domain" description="Cytoplasmic" evidence="2">
    <location>
        <begin position="398"/>
        <end position="401"/>
    </location>
</feature>
<feature type="transmembrane region" description="Helical; Name=9" evidence="2">
    <location>
        <begin position="402"/>
        <end position="425"/>
    </location>
</feature>
<feature type="topological domain" description="Extracellular" evidence="2">
    <location>
        <begin position="426"/>
        <end position="537"/>
    </location>
</feature>
<feature type="transmembrane region" description="Helical; Name=10" evidence="2">
    <location>
        <begin position="538"/>
        <end position="560"/>
    </location>
</feature>
<feature type="topological domain" description="Cytoplasmic" evidence="2">
    <location>
        <begin position="561"/>
        <end position="569"/>
    </location>
</feature>
<feature type="transmembrane region" description="Helical; Name=11" evidence="2">
    <location>
        <begin position="570"/>
        <end position="595"/>
    </location>
</feature>
<feature type="topological domain" description="Extracellular" evidence="2">
    <location>
        <begin position="596"/>
        <end position="629"/>
    </location>
</feature>
<feature type="transmembrane region" description="Helical; Name=12" evidence="2">
    <location>
        <begin position="630"/>
        <end position="647"/>
    </location>
</feature>
<feature type="topological domain" description="Cytoplasmic" evidence="2">
    <location>
        <begin position="648"/>
        <end position="695"/>
    </location>
</feature>
<feature type="domain" description="Kazal-like" evidence="3">
    <location>
        <begin position="453"/>
        <end position="508"/>
    </location>
</feature>
<feature type="modified residue" description="Phosphoserine" evidence="1">
    <location>
        <position position="293"/>
    </location>
</feature>
<feature type="modified residue" description="Phosphoserine" evidence="1">
    <location>
        <position position="295"/>
    </location>
</feature>
<feature type="modified residue" description="Phosphoserine" evidence="1">
    <location>
        <position position="683"/>
    </location>
</feature>
<feature type="glycosylation site" description="N-linked (GlcNAc...) asparagine" evidence="2">
    <location>
        <position position="134"/>
    </location>
</feature>
<feature type="glycosylation site" description="N-linked (GlcNAc...) asparagine" evidence="2">
    <location>
        <position position="145"/>
    </location>
</feature>
<feature type="glycosylation site" description="N-linked (GlcNAc...) asparagine" evidence="2">
    <location>
        <position position="151"/>
    </location>
</feature>
<feature type="glycosylation site" description="N-linked (GlcNAc...) asparagine" evidence="2">
    <location>
        <position position="445"/>
    </location>
</feature>
<feature type="glycosylation site" description="N-linked (GlcNAc...) asparagine" evidence="2">
    <location>
        <position position="503"/>
    </location>
</feature>
<feature type="glycosylation site" description="N-linked (GlcNAc...) asparagine" evidence="2">
    <location>
        <position position="516"/>
    </location>
</feature>
<feature type="disulfide bond" evidence="3">
    <location>
        <begin position="459"/>
        <end position="489"/>
    </location>
</feature>
<feature type="disulfide bond" evidence="3">
    <location>
        <begin position="465"/>
        <end position="485"/>
    </location>
</feature>
<feature type="disulfide bond" evidence="3">
    <location>
        <begin position="474"/>
        <end position="506"/>
    </location>
</feature>
<feature type="splice variant" id="VSP_056615" description="In isoform SLCO1B3-2." evidence="21">
    <original>GRVYLGLSIALRFPALVLYIVFIFAMKKKFQGKDTKASDNERK</original>
    <variation>GIVQPELKALAIGFHSMIMRSLGGILVPIYFGALIDTTCMKWSTNSCGARGACRIYNSTYLGRAFFGLKVALIFPVLVLLTVFIFVVRKKSHGKDTKVLENERQ</variation>
    <location>
        <begin position="622"/>
        <end position="664"/>
    </location>
</feature>
<feature type="splice variant" id="VSP_056616" description="In isoform SLCO1B3-2." evidence="21">
    <original>NG</original>
    <variation>DS</variation>
    <location>
        <begin position="676"/>
        <end position="677"/>
    </location>
</feature>
<feature type="splice variant" id="VSP_056617" description="In isoform SLCO1B3-2." evidence="21">
    <original>GTDSKTCNLDMQDNAAAN</original>
    <variation>EEQ</variation>
    <location>
        <begin position="685"/>
        <end position="702"/>
    </location>
</feature>
<feature type="sequence variant" id="VAR_024645" description="In dbSNP:rs4149117.">
    <original>S</original>
    <variation>A</variation>
    <location>
        <position position="112"/>
    </location>
</feature>
<feature type="sequence variant" id="VAR_053672" description="In dbSNP:rs7311358.">
    <original>M</original>
    <variation>I</variation>
    <location>
        <position position="233"/>
    </location>
</feature>
<feature type="sequence variant" id="VAR_062150" description="In dbSNP:rs60140950.">
    <original>G</original>
    <variation>A</variation>
    <location>
        <position position="256"/>
    </location>
</feature>
<feature type="sequence variant" id="VAR_036410" description="In a colorectal cancer sample; somatic mutation." evidence="11">
    <original>I</original>
    <variation>M</variation>
    <location>
        <position position="292"/>
    </location>
</feature>
<feature type="sequence variant" id="VAR_053673" description="In dbSNP:rs12299012.">
    <original>V</original>
    <variation>A</variation>
    <location>
        <position position="560"/>
    </location>
</feature>
<feature type="sequence variant" id="VAR_036411" description="In a colorectal cancer sample; somatic mutation; dbSNP:rs556554798." evidence="11">
    <original>M</original>
    <variation>L</variation>
    <location>
        <position position="647"/>
    </location>
</feature>
<feature type="helix" evidence="25">
    <location>
        <begin position="27"/>
        <end position="50"/>
    </location>
</feature>
<feature type="helix" evidence="25">
    <location>
        <begin position="52"/>
        <end position="59"/>
    </location>
</feature>
<feature type="helix" evidence="25">
    <location>
        <begin position="63"/>
        <end position="84"/>
    </location>
</feature>
<feature type="helix" evidence="25">
    <location>
        <begin position="93"/>
        <end position="112"/>
    </location>
</feature>
<feature type="helix" evidence="25">
    <location>
        <begin position="114"/>
        <end position="117"/>
    </location>
</feature>
<feature type="helix" evidence="25">
    <location>
        <begin position="171"/>
        <end position="185"/>
    </location>
</feature>
<feature type="helix" evidence="25">
    <location>
        <begin position="188"/>
        <end position="199"/>
    </location>
</feature>
<feature type="helix" evidence="25">
    <location>
        <begin position="208"/>
        <end position="216"/>
    </location>
</feature>
<feature type="helix" evidence="25">
    <location>
        <begin position="218"/>
        <end position="230"/>
    </location>
</feature>
<feature type="strand" evidence="25">
    <location>
        <begin position="242"/>
        <end position="244"/>
    </location>
</feature>
<feature type="helix" evidence="25">
    <location>
        <begin position="258"/>
        <end position="273"/>
    </location>
</feature>
<feature type="helix" evidence="25">
    <location>
        <begin position="274"/>
        <end position="276"/>
    </location>
</feature>
<feature type="helix" evidence="25">
    <location>
        <begin position="325"/>
        <end position="334"/>
    </location>
</feature>
<feature type="helix" evidence="25">
    <location>
        <begin position="336"/>
        <end position="357"/>
    </location>
</feature>
<feature type="helix" evidence="25">
    <location>
        <begin position="359"/>
        <end position="367"/>
    </location>
</feature>
<feature type="helix" evidence="25">
    <location>
        <begin position="371"/>
        <end position="400"/>
    </location>
</feature>
<feature type="helix" evidence="25">
    <location>
        <begin position="404"/>
        <end position="424"/>
    </location>
</feature>
<feature type="turn" evidence="25">
    <location>
        <begin position="425"/>
        <end position="427"/>
    </location>
</feature>
<feature type="turn" evidence="25">
    <location>
        <begin position="437"/>
        <end position="439"/>
    </location>
</feature>
<feature type="strand" evidence="25">
    <location>
        <begin position="444"/>
        <end position="447"/>
    </location>
</feature>
<feature type="helix" evidence="25">
    <location>
        <begin position="458"/>
        <end position="461"/>
    </location>
</feature>
<feature type="strand" evidence="25">
    <location>
        <begin position="473"/>
        <end position="475"/>
    </location>
</feature>
<feature type="strand" evidence="25">
    <location>
        <begin position="480"/>
        <end position="482"/>
    </location>
</feature>
<feature type="helix" evidence="25">
    <location>
        <begin position="484"/>
        <end position="487"/>
    </location>
</feature>
<feature type="helix" evidence="25">
    <location>
        <begin position="505"/>
        <end position="507"/>
    </location>
</feature>
<feature type="strand" evidence="25">
    <location>
        <begin position="519"/>
        <end position="522"/>
    </location>
</feature>
<feature type="helix" evidence="25">
    <location>
        <begin position="528"/>
        <end position="560"/>
    </location>
</feature>
<feature type="helix" evidence="25">
    <location>
        <begin position="565"/>
        <end position="567"/>
    </location>
</feature>
<feature type="helix" evidence="25">
    <location>
        <begin position="568"/>
        <end position="584"/>
    </location>
</feature>
<feature type="helix" evidence="25">
    <location>
        <begin position="587"/>
        <end position="597"/>
    </location>
</feature>
<feature type="strand" evidence="25">
    <location>
        <begin position="599"/>
        <end position="602"/>
    </location>
</feature>
<feature type="strand" evidence="25">
    <location>
        <begin position="612"/>
        <end position="616"/>
    </location>
</feature>
<feature type="helix" evidence="25">
    <location>
        <begin position="618"/>
        <end position="648"/>
    </location>
</feature>
<comment type="function">
    <text evidence="4 5 7 8 9 10 12 13 14 15 16 24">Mediates the Na(+)-independent uptake of organic anions (PubMed:10779507, PubMed:15159445, PubMed:17412826). Shows broad substrate specificity, can transport both organic anions such as bile acid taurocholate (cholyltaurine) and conjugated steroids (17-beta-glucuronosyl estradiol, dehydroepiandrosterone sulfate (DHEAS), and estrone 3-sulfate), as well as eicosanoid leukotriene C4, prostaglandin E2 and L-thyroxine (T4) (PubMed:10779507, PubMed:11159893, PubMed:12568656, PubMed:15159445, PubMed:17412826, PubMed:19129463). Hydrogencarbonate/HCO3(-) acts as the probable counteranion that exchanges for organic anions (PubMed:19129463). Shows a pH-sensitive substrate specificity towards sulfated steroids, taurocholate and T4 which may be ascribed to the protonation state of the binding site and leads to a stimulation of substrate transport in an acidic microenvironment (PubMed:19129463). Involved in the clearance of bile acids and organic anions from the liver (PubMed:22232210). Can take up bilirubin glucuronides from plasma into the liver, contributing to the detoxification-enhancing liver-blood shuttling loop (PubMed:22232210). Transports coproporphyrin I and III, by-products of heme synthesis, and may be involved in their hepatic disposition (PubMed:26383540). May contribute to regulate the transport of organic compounds in testes across the blood-testis-barrier (Probable). Can transport HMG-CoA reductase inhibitors (also known as statins) such as pitavastatin, a clinically important class of hypolipidemic drugs (PubMed:15159445). May play an important role in plasma and tissue distribution of the structurally diverse chemotherapeutic drugs methotrexate and paclitaxel (PubMed:23243220). May also transport antihypertension agents, such as the angiotensin-converting enzyme (ACE) inhibitor prodrug enalapril, and the highly selective angiotensin II AT1-receptor antagonist valsartan, in the liver (PubMed:16624871, PubMed:16627748).</text>
</comment>
<comment type="catalytic activity">
    <reaction evidence="13">
        <text>estrone 3-sulfate(out) + hydrogencarbonate(in) = estrone 3-sulfate(in) + hydrogencarbonate(out)</text>
        <dbReference type="Rhea" id="RHEA:73055"/>
        <dbReference type="ChEBI" id="CHEBI:17544"/>
        <dbReference type="ChEBI" id="CHEBI:60050"/>
    </reaction>
</comment>
<comment type="catalytic activity">
    <reaction evidence="4 7 8">
        <text>17beta-estradiol 17-O-(beta-D-glucuronate)(out) = 17beta-estradiol 17-O-(beta-D-glucuronate)(in)</text>
        <dbReference type="Rhea" id="RHEA:72691"/>
        <dbReference type="ChEBI" id="CHEBI:82961"/>
    </reaction>
</comment>
<comment type="catalytic activity">
    <reaction evidence="12 23">
        <text>taurocholate(out) = taurocholate(in)</text>
        <dbReference type="Rhea" id="RHEA:71703"/>
        <dbReference type="ChEBI" id="CHEBI:36257"/>
    </reaction>
</comment>
<comment type="catalytic activity">
    <reaction evidence="12">
        <text>estrone 3-sulfate(out) = estrone 3-sulfate(in)</text>
        <dbReference type="Rhea" id="RHEA:71835"/>
        <dbReference type="ChEBI" id="CHEBI:60050"/>
    </reaction>
</comment>
<comment type="catalytic activity">
    <reaction evidence="4">
        <text>dehydroepiandrosterone 3-sulfate(out) = dehydroepiandrosterone 3-sulfate(in)</text>
        <dbReference type="Rhea" id="RHEA:71839"/>
        <dbReference type="ChEBI" id="CHEBI:57905"/>
    </reaction>
</comment>
<comment type="catalytic activity">
    <reaction evidence="4">
        <text>leukotriene C4(out) = leukotriene C4(in)</text>
        <dbReference type="Rhea" id="RHEA:72743"/>
        <dbReference type="ChEBI" id="CHEBI:57973"/>
    </reaction>
</comment>
<comment type="catalytic activity">
    <reaction evidence="23">
        <text>L-thyroxine(out) = L-thyroxine(in)</text>
        <dbReference type="Rhea" id="RHEA:71819"/>
        <dbReference type="ChEBI" id="CHEBI:58448"/>
    </reaction>
</comment>
<comment type="catalytic activity">
    <reaction evidence="23">
        <text>prostaglandin E2(out) = prostaglandin E2(in)</text>
        <dbReference type="Rhea" id="RHEA:50984"/>
        <dbReference type="ChEBI" id="CHEBI:606564"/>
    </reaction>
</comment>
<comment type="catalytic activity">
    <reaction evidence="14">
        <text>(4E,15E)-bilirubin IXalpha C8-beta-D-glucuronoside(out) = (4E,15E)-bilirubin IXalpha C8-beta-D-glucuronoside(in)</text>
        <dbReference type="Rhea" id="RHEA:72791"/>
        <dbReference type="ChEBI" id="CHEBI:57767"/>
    </reaction>
</comment>
<comment type="catalytic activity">
    <reaction evidence="14">
        <text>bilirubin IXalpha bis-beta-D-glucuronoside(out) = bilirubin IXalpha bis-beta-D-glucuronoside(in)</text>
        <dbReference type="Rhea" id="RHEA:72795"/>
        <dbReference type="ChEBI" id="CHEBI:58471"/>
    </reaction>
</comment>
<comment type="biophysicochemical properties">
    <kinetics>
        <KM evidence="8">3.25 uM for pitavastatin</KM>
        <KM evidence="4">5.4 uM for 17beta-estradiol 17-O-(beta-D-glucuronate)</KM>
        <KM evidence="4">3.3 uM for sulfobromophthalein</KM>
        <KM evidence="8">24.6 uM for 17beta-estradiol 17-O-(beta-D-glucuronate)</KM>
        <KM evidence="9">18.2 uM for valsartan</KM>
        <KM evidence="16">3.95 uM for coproporphyrin I</KM>
        <KM evidence="16">1.55 uM for coproporphyrin III</KM>
        <KM evidence="13">54.6 uM for estrone 3-sulfate (at pH 6.5)</KM>
        <KM evidence="13">73 uM for estrone 3-sulfate (at pH 8.0)</KM>
        <Vmax evidence="8">100.0 pmol/min/mg protein with pitavastatin</Vmax>
        <Vmax evidence="8">56.8 pmol/min/mg protein with 17beta-estradiol 17-O-(beta-D-glucuronate)</Vmax>
        <Vmax evidence="9">135.0 pmol/min/mg protein with valsartan</Vmax>
        <Vmax evidence="16">17.0 pmol/min/mg enzyme with coproporphyrin I as substrate</Vmax>
        <Vmax evidence="16">14.9 pmol/min/mg enzyme with coproporphyrin III as substrate</Vmax>
        <Vmax evidence="13">1798.0 pmol/min/mg enzyme with estrone 3-sulfate as substrate (at pH 6.5)</Vmax>
        <Vmax evidence="13">1776.0 pmol/min/mg enzyme with estrone 3-sulfate as substrate (at pH 8.0)</Vmax>
    </kinetics>
    <phDependence>
        <text evidence="13">Optimum pH is 6.5 with estrone 3-sulfate, taurocholate and L-thyroxine (T4) as substrates.</text>
    </phDependence>
</comment>
<comment type="subcellular location">
    <subcellularLocation>
        <location evidence="4">Basolateral cell membrane</location>
        <topology evidence="22">Multi-pass membrane protein</topology>
    </subcellularLocation>
    <subcellularLocation>
        <location evidence="17">Basal cell membrane</location>
        <topology evidence="22">Multi-pass membrane protein</topology>
    </subcellularLocation>
    <text evidence="4 17">Localized to the basolateral membrane of hepatocytes (PubMed:10779507). Localized to the basal membrane of Sertoli cells (PubMed:35307651).</text>
</comment>
<comment type="alternative products">
    <event type="alternative splicing"/>
    <isoform>
        <id>Q9NPD5-1</id>
        <name>SLCO1B3-1</name>
        <sequence type="displayed"/>
    </isoform>
    <isoform>
        <id>Q9NPD5-2</id>
        <name>SLCO1B3-2</name>
        <sequence type="described" ref="VSP_056615 VSP_056616 VSP_056617"/>
    </isoform>
    <isoform>
        <id>F5H094-1</id>
        <name>SLCO1B3-SLCO1B7-1</name>
        <sequence type="external"/>
    </isoform>
</comment>
<comment type="tissue specificity">
    <text evidence="4 6 8 17">Highly expressed in liver, in particular at the basolateral membrane of hepatocytes near the central vein (PubMed:10779507, PubMed:15159445). Expressed in the placenta (PubMed:12409283). In testis, primarily localized to the basal membrane of Sertoli cells and weakly expressed in Leydig cells and within the tubules (PubMed:35307651).</text>
</comment>
<comment type="domain">
    <text evidence="23">A conserved histidine residue in the third TMD (His-115) may play an essential role in the pH sensitivity of SLCO1B3/OATP1B3-mediated substrate transport.</text>
</comment>
<comment type="PTM">
    <text evidence="4">N-glycosylated.</text>
</comment>
<comment type="disease" evidence="14">
    <disease id="DI-03360">
        <name>Hyperbilirubinemia, Rotor type</name>
        <acronym>HBLRR</acronym>
        <description>An autosomal recessive form of primary conjugated hyperbilirubinemia. Affected individuals develop mild jaundice not associated with hemolysis shortly after birth or in childhood. They have delayed plasma clearance of the unconjugated anionic dye bromsulphthalein and prominent urinary excretion of coproporphyrin I. Hepatic pigmentation is normal.</description>
        <dbReference type="MIM" id="237450"/>
    </disease>
    <text>The disease is caused by variants affecting the gene represented in this entry.</text>
</comment>
<comment type="similarity">
    <text evidence="22">Belongs to the organo anion transporter (TC 2.A.60) family.</text>
</comment>
<gene>
    <name type="primary">SLCO1B3</name>
    <name type="synonym">LST2</name>
    <name type="synonym">OATP1B3</name>
    <name type="synonym">OATP8</name>
    <name type="synonym">SLC21A8</name>
</gene>
<sequence>MDQHQHLNKTAESASSEKKKTRRCNGFKMFLAALSFSYIAKALGGIIMKISITQIERRFDISSSLAGLIDGSFEIGNLLVIVFVSYFGSKLHRPKLIGIGCLLMGTGSILTSLPHFFMGYYRYSKETHINPSENSTSSLSTCLINQTLSFNGTSPEIVEKDCVKESGSHMWIYVFMGNMLRGIGETPIVPLGISYIDDFAKEGHSSLYLGSLNAIGMIGPVIGFALGSLFAKMYVDIGYVDLSTIRITPKDSRWVGAWWLGFLVSGLFSIISSIPFFFLPKNPNKPQKERKISLSLHVLKTNDDRNQTANLTNQGKNVTKNVTGFFQSLKSILTNPLYVIFLLLTLLQVSSFIGSFTYVFKYMEQQYGQSASHANFLLGIITIPTVATGMFLGGFIIKKFKLSLVGIAKFSFLTSMISFLFQLLYFPLICESKSVAGLTLTYDGNNSVASHVDVPLSYCNSECNCDESQWEPVCGNNGITYLSPCLAGCKSSSGIKKHTVFYNCSCVEVTGLQNRNYSAHLGECPRDNTCTRKFFIYVAIQVINSLFSATGGTTFILLTVKIVQPELKALAMGFQSMVIRTLGGILAPIYFGALIDKTCMKWSTNSCGAQGACRIYNSVFFGRVYLGLSIALRFPALVLYIVFIFAMKKKFQGKDTKASDNERKVMDEANLEFLNNGEHFVPSAGTDSKTCNLDMQDNAAAN</sequence>
<evidence type="ECO:0000250" key="1">
    <source>
        <dbReference type="UniProtKB" id="Q9Y6L6"/>
    </source>
</evidence>
<evidence type="ECO:0000255" key="2"/>
<evidence type="ECO:0000255" key="3">
    <source>
        <dbReference type="PROSITE-ProRule" id="PRU00798"/>
    </source>
</evidence>
<evidence type="ECO:0000269" key="4">
    <source>
    </source>
</evidence>
<evidence type="ECO:0000269" key="5">
    <source>
    </source>
</evidence>
<evidence type="ECO:0000269" key="6">
    <source>
    </source>
</evidence>
<evidence type="ECO:0000269" key="7">
    <source>
    </source>
</evidence>
<evidence type="ECO:0000269" key="8">
    <source>
    </source>
</evidence>
<evidence type="ECO:0000269" key="9">
    <source>
    </source>
</evidence>
<evidence type="ECO:0000269" key="10">
    <source>
    </source>
</evidence>
<evidence type="ECO:0000269" key="11">
    <source>
    </source>
</evidence>
<evidence type="ECO:0000269" key="12">
    <source>
    </source>
</evidence>
<evidence type="ECO:0000269" key="13">
    <source>
    </source>
</evidence>
<evidence type="ECO:0000269" key="14">
    <source>
    </source>
</evidence>
<evidence type="ECO:0000269" key="15">
    <source>
    </source>
</evidence>
<evidence type="ECO:0000269" key="16">
    <source>
    </source>
</evidence>
<evidence type="ECO:0000269" key="17">
    <source>
    </source>
</evidence>
<evidence type="ECO:0000303" key="18">
    <source>
    </source>
</evidence>
<evidence type="ECO:0000303" key="19">
    <source>
    </source>
</evidence>
<evidence type="ECO:0000303" key="20">
    <source>
    </source>
</evidence>
<evidence type="ECO:0000303" key="21">
    <source ref="3"/>
</evidence>
<evidence type="ECO:0000305" key="22"/>
<evidence type="ECO:0000305" key="23">
    <source>
    </source>
</evidence>
<evidence type="ECO:0000305" key="24">
    <source>
    </source>
</evidence>
<evidence type="ECO:0007829" key="25">
    <source>
        <dbReference type="PDB" id="8PG0"/>
    </source>
</evidence>
<accession>Q9NPD5</accession>
<accession>E7EMT8</accession>
<accession>Q5JAR4</accession>
<protein>
    <recommendedName>
        <fullName>Solute carrier organic anion transporter family member 1B3</fullName>
    </recommendedName>
    <alternativeName>
        <fullName evidence="20">Liver-specific organic anion transporter 2</fullName>
        <shortName evidence="19 20">LST-2</shortName>
    </alternativeName>
    <alternativeName>
        <fullName evidence="19 20">OATP1B3</fullName>
    </alternativeName>
    <alternativeName>
        <fullName>Organic anion transporter 8</fullName>
    </alternativeName>
    <alternativeName>
        <fullName evidence="19 20">Organic anion-transporting polypeptide 8</fullName>
        <shortName evidence="18 19 20">OATP-8</shortName>
    </alternativeName>
    <alternativeName>
        <fullName>Solute carrier family 21 member 8</fullName>
    </alternativeName>
</protein>
<proteinExistence type="evidence at protein level"/>
<organism>
    <name type="scientific">Homo sapiens</name>
    <name type="common">Human</name>
    <dbReference type="NCBI Taxonomy" id="9606"/>
    <lineage>
        <taxon>Eukaryota</taxon>
        <taxon>Metazoa</taxon>
        <taxon>Chordata</taxon>
        <taxon>Craniata</taxon>
        <taxon>Vertebrata</taxon>
        <taxon>Euteleostomi</taxon>
        <taxon>Mammalia</taxon>
        <taxon>Eutheria</taxon>
        <taxon>Euarchontoglires</taxon>
        <taxon>Primates</taxon>
        <taxon>Haplorrhini</taxon>
        <taxon>Catarrhini</taxon>
        <taxon>Hominidae</taxon>
        <taxon>Homo</taxon>
    </lineage>
</organism>